<sequence length="437" mass="47678">MSSVVVVGAQWGDEGKGKIVDLLTKYSDYIVRFQGGNNAGHTLVVDGKKFVFHIIPSGILYEEKTCMIGNGVILDPGVLLEEMASLKERGLEVKPNRLMISDNAHLIMPYHSQLDQAKESALSASNKIGTTGRGIGPCYMDKVGRVGIKAGDLLDEDLFREKLRCAIEEKNFILTKKFGAPAVDFDSVYRQFMDFAEQLSPYFGNVSVTLDEARRADKNILFEGAQGTQLDIDHGTYPFVTSSNTVAGNACAGSGFGPSHIDAVVGIVKAYTTRVGSGPFPTELFDEKGEELQNKGSEFGATTGRRRRCGWFDGVVANDAVRLNGLTGWALTKLDVLSGQKSIKMASSYDLNGKKLHAMPNNIKDAEALKPVYEEVPGWADEVDGICNYDDLPTEAKDYVRRIEDFTGVPANIVSVGPDRAQTMMLSNPFETKKCCK</sequence>
<protein>
    <recommendedName>
        <fullName evidence="1">Adenylosuccinate synthetase</fullName>
        <shortName evidence="1">AMPSase</shortName>
        <shortName evidence="1">AdSS</shortName>
        <ecNumber evidence="1">6.3.4.4</ecNumber>
    </recommendedName>
    <alternativeName>
        <fullName evidence="1">IMP--aspartate ligase</fullName>
    </alternativeName>
</protein>
<dbReference type="EC" id="6.3.4.4" evidence="1"/>
<dbReference type="EMBL" id="CR522870">
    <property type="protein sequence ID" value="CAG36209.1"/>
    <property type="molecule type" value="Genomic_DNA"/>
</dbReference>
<dbReference type="RefSeq" id="WP_011188721.1">
    <property type="nucleotide sequence ID" value="NC_006138.1"/>
</dbReference>
<dbReference type="SMR" id="Q6AN65"/>
<dbReference type="STRING" id="177439.DP1480"/>
<dbReference type="KEGG" id="dps:DP1480"/>
<dbReference type="eggNOG" id="COG0104">
    <property type="taxonomic scope" value="Bacteria"/>
</dbReference>
<dbReference type="HOGENOM" id="CLU_029848_0_0_7"/>
<dbReference type="OrthoDB" id="9807553at2"/>
<dbReference type="UniPathway" id="UPA00075">
    <property type="reaction ID" value="UER00335"/>
</dbReference>
<dbReference type="Proteomes" id="UP000000602">
    <property type="component" value="Chromosome"/>
</dbReference>
<dbReference type="GO" id="GO:0005737">
    <property type="term" value="C:cytoplasm"/>
    <property type="evidence" value="ECO:0007669"/>
    <property type="project" value="UniProtKB-SubCell"/>
</dbReference>
<dbReference type="GO" id="GO:0004019">
    <property type="term" value="F:adenylosuccinate synthase activity"/>
    <property type="evidence" value="ECO:0007669"/>
    <property type="project" value="UniProtKB-UniRule"/>
</dbReference>
<dbReference type="GO" id="GO:0005525">
    <property type="term" value="F:GTP binding"/>
    <property type="evidence" value="ECO:0007669"/>
    <property type="project" value="UniProtKB-UniRule"/>
</dbReference>
<dbReference type="GO" id="GO:0000287">
    <property type="term" value="F:magnesium ion binding"/>
    <property type="evidence" value="ECO:0007669"/>
    <property type="project" value="UniProtKB-UniRule"/>
</dbReference>
<dbReference type="GO" id="GO:0044208">
    <property type="term" value="P:'de novo' AMP biosynthetic process"/>
    <property type="evidence" value="ECO:0007669"/>
    <property type="project" value="UniProtKB-UniRule"/>
</dbReference>
<dbReference type="GO" id="GO:0046040">
    <property type="term" value="P:IMP metabolic process"/>
    <property type="evidence" value="ECO:0007669"/>
    <property type="project" value="TreeGrafter"/>
</dbReference>
<dbReference type="CDD" id="cd03108">
    <property type="entry name" value="AdSS"/>
    <property type="match status" value="1"/>
</dbReference>
<dbReference type="FunFam" id="1.10.300.10:FF:000001">
    <property type="entry name" value="Adenylosuccinate synthetase"/>
    <property type="match status" value="1"/>
</dbReference>
<dbReference type="FunFam" id="3.90.170.10:FF:000001">
    <property type="entry name" value="Adenylosuccinate synthetase"/>
    <property type="match status" value="1"/>
</dbReference>
<dbReference type="Gene3D" id="3.40.440.10">
    <property type="entry name" value="Adenylosuccinate Synthetase, subunit A, domain 1"/>
    <property type="match status" value="1"/>
</dbReference>
<dbReference type="Gene3D" id="1.10.300.10">
    <property type="entry name" value="Adenylosuccinate Synthetase, subunit A, domain 2"/>
    <property type="match status" value="1"/>
</dbReference>
<dbReference type="Gene3D" id="3.90.170.10">
    <property type="entry name" value="Adenylosuccinate Synthetase, subunit A, domain 3"/>
    <property type="match status" value="1"/>
</dbReference>
<dbReference type="HAMAP" id="MF_00011">
    <property type="entry name" value="Adenylosucc_synth"/>
    <property type="match status" value="1"/>
</dbReference>
<dbReference type="InterPro" id="IPR018220">
    <property type="entry name" value="Adenylosuccin_syn_GTP-bd"/>
</dbReference>
<dbReference type="InterPro" id="IPR033128">
    <property type="entry name" value="Adenylosuccin_syn_Lys_AS"/>
</dbReference>
<dbReference type="InterPro" id="IPR042109">
    <property type="entry name" value="Adenylosuccinate_synth_dom1"/>
</dbReference>
<dbReference type="InterPro" id="IPR042110">
    <property type="entry name" value="Adenylosuccinate_synth_dom2"/>
</dbReference>
<dbReference type="InterPro" id="IPR042111">
    <property type="entry name" value="Adenylosuccinate_synth_dom3"/>
</dbReference>
<dbReference type="InterPro" id="IPR001114">
    <property type="entry name" value="Adenylosuccinate_synthetase"/>
</dbReference>
<dbReference type="InterPro" id="IPR027417">
    <property type="entry name" value="P-loop_NTPase"/>
</dbReference>
<dbReference type="NCBIfam" id="NF002223">
    <property type="entry name" value="PRK01117.1"/>
    <property type="match status" value="1"/>
</dbReference>
<dbReference type="NCBIfam" id="TIGR00184">
    <property type="entry name" value="purA"/>
    <property type="match status" value="1"/>
</dbReference>
<dbReference type="PANTHER" id="PTHR11846">
    <property type="entry name" value="ADENYLOSUCCINATE SYNTHETASE"/>
    <property type="match status" value="1"/>
</dbReference>
<dbReference type="PANTHER" id="PTHR11846:SF0">
    <property type="entry name" value="ADENYLOSUCCINATE SYNTHETASE"/>
    <property type="match status" value="1"/>
</dbReference>
<dbReference type="Pfam" id="PF00709">
    <property type="entry name" value="Adenylsucc_synt"/>
    <property type="match status" value="1"/>
</dbReference>
<dbReference type="SMART" id="SM00788">
    <property type="entry name" value="Adenylsucc_synt"/>
    <property type="match status" value="1"/>
</dbReference>
<dbReference type="SUPFAM" id="SSF52540">
    <property type="entry name" value="P-loop containing nucleoside triphosphate hydrolases"/>
    <property type="match status" value="1"/>
</dbReference>
<dbReference type="PROSITE" id="PS01266">
    <property type="entry name" value="ADENYLOSUCCIN_SYN_1"/>
    <property type="match status" value="1"/>
</dbReference>
<dbReference type="PROSITE" id="PS00513">
    <property type="entry name" value="ADENYLOSUCCIN_SYN_2"/>
    <property type="match status" value="1"/>
</dbReference>
<accession>Q6AN65</accession>
<gene>
    <name evidence="1" type="primary">purA</name>
    <name type="ordered locus">DP1480</name>
</gene>
<reference key="1">
    <citation type="journal article" date="2004" name="Environ. Microbiol.">
        <title>The genome of Desulfotalea psychrophila, a sulfate-reducing bacterium from permanently cold Arctic sediments.</title>
        <authorList>
            <person name="Rabus R."/>
            <person name="Ruepp A."/>
            <person name="Frickey T."/>
            <person name="Rattei T."/>
            <person name="Fartmann B."/>
            <person name="Stark M."/>
            <person name="Bauer M."/>
            <person name="Zibat A."/>
            <person name="Lombardot T."/>
            <person name="Becker I."/>
            <person name="Amann J."/>
            <person name="Gellner K."/>
            <person name="Teeling H."/>
            <person name="Leuschner W.D."/>
            <person name="Gloeckner F.-O."/>
            <person name="Lupas A.N."/>
            <person name="Amann R."/>
            <person name="Klenk H.-P."/>
        </authorList>
    </citation>
    <scope>NUCLEOTIDE SEQUENCE [LARGE SCALE GENOMIC DNA]</scope>
    <source>
        <strain>DSM 12343 / LSv54</strain>
    </source>
</reference>
<proteinExistence type="inferred from homology"/>
<keyword id="KW-0963">Cytoplasm</keyword>
<keyword id="KW-0342">GTP-binding</keyword>
<keyword id="KW-0436">Ligase</keyword>
<keyword id="KW-0460">Magnesium</keyword>
<keyword id="KW-0479">Metal-binding</keyword>
<keyword id="KW-0547">Nucleotide-binding</keyword>
<keyword id="KW-0658">Purine biosynthesis</keyword>
<keyword id="KW-1185">Reference proteome</keyword>
<comment type="function">
    <text evidence="1">Plays an important role in the de novo pathway of purine nucleotide biosynthesis. Catalyzes the first committed step in the biosynthesis of AMP from IMP.</text>
</comment>
<comment type="catalytic activity">
    <reaction evidence="1">
        <text>IMP + L-aspartate + GTP = N(6)-(1,2-dicarboxyethyl)-AMP + GDP + phosphate + 2 H(+)</text>
        <dbReference type="Rhea" id="RHEA:15753"/>
        <dbReference type="ChEBI" id="CHEBI:15378"/>
        <dbReference type="ChEBI" id="CHEBI:29991"/>
        <dbReference type="ChEBI" id="CHEBI:37565"/>
        <dbReference type="ChEBI" id="CHEBI:43474"/>
        <dbReference type="ChEBI" id="CHEBI:57567"/>
        <dbReference type="ChEBI" id="CHEBI:58053"/>
        <dbReference type="ChEBI" id="CHEBI:58189"/>
        <dbReference type="EC" id="6.3.4.4"/>
    </reaction>
</comment>
<comment type="cofactor">
    <cofactor evidence="1">
        <name>Mg(2+)</name>
        <dbReference type="ChEBI" id="CHEBI:18420"/>
    </cofactor>
    <text evidence="1">Binds 1 Mg(2+) ion per subunit.</text>
</comment>
<comment type="pathway">
    <text evidence="1">Purine metabolism; AMP biosynthesis via de novo pathway; AMP from IMP: step 1/2.</text>
</comment>
<comment type="subunit">
    <text evidence="1">Homodimer.</text>
</comment>
<comment type="subcellular location">
    <subcellularLocation>
        <location evidence="1">Cytoplasm</location>
    </subcellularLocation>
</comment>
<comment type="similarity">
    <text evidence="1">Belongs to the adenylosuccinate synthetase family.</text>
</comment>
<name>PURA_DESPS</name>
<organism>
    <name type="scientific">Desulfotalea psychrophila (strain LSv54 / DSM 12343)</name>
    <dbReference type="NCBI Taxonomy" id="177439"/>
    <lineage>
        <taxon>Bacteria</taxon>
        <taxon>Pseudomonadati</taxon>
        <taxon>Thermodesulfobacteriota</taxon>
        <taxon>Desulfobulbia</taxon>
        <taxon>Desulfobulbales</taxon>
        <taxon>Desulfocapsaceae</taxon>
        <taxon>Desulfotalea</taxon>
    </lineage>
</organism>
<feature type="chain" id="PRO_0000224274" description="Adenylosuccinate synthetase">
    <location>
        <begin position="1"/>
        <end position="437"/>
    </location>
</feature>
<feature type="active site" description="Proton acceptor" evidence="1">
    <location>
        <position position="13"/>
    </location>
</feature>
<feature type="active site" description="Proton donor" evidence="1">
    <location>
        <position position="41"/>
    </location>
</feature>
<feature type="binding site" evidence="1">
    <location>
        <begin position="12"/>
        <end position="18"/>
    </location>
    <ligand>
        <name>GTP</name>
        <dbReference type="ChEBI" id="CHEBI:37565"/>
    </ligand>
</feature>
<feature type="binding site" description="in other chain" evidence="1">
    <location>
        <begin position="13"/>
        <end position="16"/>
    </location>
    <ligand>
        <name>IMP</name>
        <dbReference type="ChEBI" id="CHEBI:58053"/>
        <note>ligand shared between dimeric partners</note>
    </ligand>
</feature>
<feature type="binding site" evidence="1">
    <location>
        <position position="13"/>
    </location>
    <ligand>
        <name>Mg(2+)</name>
        <dbReference type="ChEBI" id="CHEBI:18420"/>
    </ligand>
</feature>
<feature type="binding site" description="in other chain" evidence="1">
    <location>
        <begin position="38"/>
        <end position="41"/>
    </location>
    <ligand>
        <name>IMP</name>
        <dbReference type="ChEBI" id="CHEBI:58053"/>
        <note>ligand shared between dimeric partners</note>
    </ligand>
</feature>
<feature type="binding site" evidence="1">
    <location>
        <begin position="40"/>
        <end position="42"/>
    </location>
    <ligand>
        <name>GTP</name>
        <dbReference type="ChEBI" id="CHEBI:37565"/>
    </ligand>
</feature>
<feature type="binding site" evidence="1">
    <location>
        <position position="40"/>
    </location>
    <ligand>
        <name>Mg(2+)</name>
        <dbReference type="ChEBI" id="CHEBI:18420"/>
    </ligand>
</feature>
<feature type="binding site" description="in other chain" evidence="1">
    <location>
        <position position="131"/>
    </location>
    <ligand>
        <name>IMP</name>
        <dbReference type="ChEBI" id="CHEBI:58053"/>
        <note>ligand shared between dimeric partners</note>
    </ligand>
</feature>
<feature type="binding site" evidence="1">
    <location>
        <position position="145"/>
    </location>
    <ligand>
        <name>IMP</name>
        <dbReference type="ChEBI" id="CHEBI:58053"/>
        <note>ligand shared between dimeric partners</note>
    </ligand>
</feature>
<feature type="binding site" description="in other chain" evidence="1">
    <location>
        <position position="226"/>
    </location>
    <ligand>
        <name>IMP</name>
        <dbReference type="ChEBI" id="CHEBI:58053"/>
        <note>ligand shared between dimeric partners</note>
    </ligand>
</feature>
<feature type="binding site" description="in other chain" evidence="1">
    <location>
        <position position="241"/>
    </location>
    <ligand>
        <name>IMP</name>
        <dbReference type="ChEBI" id="CHEBI:58053"/>
        <note>ligand shared between dimeric partners</note>
    </ligand>
</feature>
<feature type="binding site" evidence="1">
    <location>
        <begin position="301"/>
        <end position="307"/>
    </location>
    <ligand>
        <name>substrate</name>
    </ligand>
</feature>
<feature type="binding site" description="in other chain" evidence="1">
    <location>
        <position position="305"/>
    </location>
    <ligand>
        <name>IMP</name>
        <dbReference type="ChEBI" id="CHEBI:58053"/>
        <note>ligand shared between dimeric partners</note>
    </ligand>
</feature>
<feature type="binding site" evidence="1">
    <location>
        <position position="307"/>
    </location>
    <ligand>
        <name>GTP</name>
        <dbReference type="ChEBI" id="CHEBI:37565"/>
    </ligand>
</feature>
<feature type="binding site" evidence="1">
    <location>
        <begin position="333"/>
        <end position="335"/>
    </location>
    <ligand>
        <name>GTP</name>
        <dbReference type="ChEBI" id="CHEBI:37565"/>
    </ligand>
</feature>
<feature type="binding site" evidence="1">
    <location>
        <begin position="415"/>
        <end position="417"/>
    </location>
    <ligand>
        <name>GTP</name>
        <dbReference type="ChEBI" id="CHEBI:37565"/>
    </ligand>
</feature>
<evidence type="ECO:0000255" key="1">
    <source>
        <dbReference type="HAMAP-Rule" id="MF_00011"/>
    </source>
</evidence>